<feature type="chain" id="PRO_0000074706" description="Sensor protein QseC">
    <location>
        <begin position="1"/>
        <end position="449"/>
    </location>
</feature>
<feature type="topological domain" description="Cytoplasmic" evidence="2">
    <location>
        <begin position="1"/>
        <end position="12"/>
    </location>
</feature>
<feature type="transmembrane region" description="Helical" evidence="2">
    <location>
        <begin position="13"/>
        <end position="33"/>
    </location>
</feature>
<feature type="topological domain" description="Periplasmic" evidence="2">
    <location>
        <begin position="34"/>
        <end position="161"/>
    </location>
</feature>
<feature type="transmembrane region" description="Helical" evidence="2">
    <location>
        <begin position="162"/>
        <end position="182"/>
    </location>
</feature>
<feature type="topological domain" description="Cytoplasmic" evidence="2">
    <location>
        <begin position="183"/>
        <end position="449"/>
    </location>
</feature>
<feature type="domain" description="HAMP" evidence="3">
    <location>
        <begin position="183"/>
        <end position="235"/>
    </location>
</feature>
<feature type="domain" description="Histidine kinase" evidence="4">
    <location>
        <begin position="243"/>
        <end position="449"/>
    </location>
</feature>
<feature type="modified residue" description="Phosphohistidine; by autocatalysis" evidence="4">
    <location>
        <position position="246"/>
    </location>
</feature>
<proteinExistence type="inferred from homology"/>
<accession>Q8Z3P2</accession>
<dbReference type="EC" id="2.7.13.3"/>
<dbReference type="EMBL" id="AL513382">
    <property type="protein sequence ID" value="CAD03010.1"/>
    <property type="molecule type" value="Genomic_DNA"/>
</dbReference>
<dbReference type="EMBL" id="AE014613">
    <property type="protein sequence ID" value="AAO70643.1"/>
    <property type="molecule type" value="Genomic_DNA"/>
</dbReference>
<dbReference type="RefSeq" id="NP_457571.1">
    <property type="nucleotide sequence ID" value="NC_003198.1"/>
</dbReference>
<dbReference type="RefSeq" id="WP_000779337.1">
    <property type="nucleotide sequence ID" value="NZ_WSUR01000003.1"/>
</dbReference>
<dbReference type="SMR" id="Q8Z3P2"/>
<dbReference type="STRING" id="220341.gene:17587213"/>
<dbReference type="KEGG" id="stt:t3099"/>
<dbReference type="KEGG" id="sty:STY3355"/>
<dbReference type="PATRIC" id="fig|220341.7.peg.3415"/>
<dbReference type="eggNOG" id="COG0642">
    <property type="taxonomic scope" value="Bacteria"/>
</dbReference>
<dbReference type="HOGENOM" id="CLU_000445_89_37_6"/>
<dbReference type="OMA" id="WRIFWLP"/>
<dbReference type="OrthoDB" id="9809766at2"/>
<dbReference type="BRENDA" id="2.7.13.3">
    <property type="organism ID" value="5557"/>
</dbReference>
<dbReference type="PHI-base" id="PHI:6883"/>
<dbReference type="Proteomes" id="UP000000541">
    <property type="component" value="Chromosome"/>
</dbReference>
<dbReference type="Proteomes" id="UP000002670">
    <property type="component" value="Chromosome"/>
</dbReference>
<dbReference type="GO" id="GO:0005886">
    <property type="term" value="C:plasma membrane"/>
    <property type="evidence" value="ECO:0007669"/>
    <property type="project" value="UniProtKB-SubCell"/>
</dbReference>
<dbReference type="GO" id="GO:0005524">
    <property type="term" value="F:ATP binding"/>
    <property type="evidence" value="ECO:0007669"/>
    <property type="project" value="UniProtKB-KW"/>
</dbReference>
<dbReference type="GO" id="GO:0000155">
    <property type="term" value="F:phosphorelay sensor kinase activity"/>
    <property type="evidence" value="ECO:0007669"/>
    <property type="project" value="InterPro"/>
</dbReference>
<dbReference type="CDD" id="cd00082">
    <property type="entry name" value="HisKA"/>
    <property type="match status" value="1"/>
</dbReference>
<dbReference type="FunFam" id="1.20.5.1040:FF:000001">
    <property type="entry name" value="Sensor histidine kinase QseC"/>
    <property type="match status" value="1"/>
</dbReference>
<dbReference type="FunFam" id="1.20.5.1040:FF:000002">
    <property type="entry name" value="Sensor histidine kinase QseC"/>
    <property type="match status" value="1"/>
</dbReference>
<dbReference type="FunFam" id="1.10.287.130:FF:000035">
    <property type="entry name" value="Two-component sensor histidine kinase"/>
    <property type="match status" value="1"/>
</dbReference>
<dbReference type="FunFam" id="3.30.565.10:FF:000055">
    <property type="entry name" value="Two-component sensor histidine kinase"/>
    <property type="match status" value="1"/>
</dbReference>
<dbReference type="Gene3D" id="1.10.287.130">
    <property type="match status" value="1"/>
</dbReference>
<dbReference type="Gene3D" id="3.30.565.10">
    <property type="entry name" value="Histidine kinase-like ATPase, C-terminal domain"/>
    <property type="match status" value="1"/>
</dbReference>
<dbReference type="Gene3D" id="1.20.5.1040">
    <property type="entry name" value="Sensor protein qsec"/>
    <property type="match status" value="2"/>
</dbReference>
<dbReference type="InterPro" id="IPR003660">
    <property type="entry name" value="HAMP_dom"/>
</dbReference>
<dbReference type="InterPro" id="IPR036890">
    <property type="entry name" value="HATPase_C_sf"/>
</dbReference>
<dbReference type="InterPro" id="IPR005467">
    <property type="entry name" value="His_kinase_dom"/>
</dbReference>
<dbReference type="InterPro" id="IPR003661">
    <property type="entry name" value="HisK_dim/P_dom"/>
</dbReference>
<dbReference type="InterPro" id="IPR036097">
    <property type="entry name" value="HisK_dim/P_sf"/>
</dbReference>
<dbReference type="InterPro" id="IPR004358">
    <property type="entry name" value="Sig_transdc_His_kin-like_C"/>
</dbReference>
<dbReference type="InterPro" id="IPR050428">
    <property type="entry name" value="TCS_sensor_his_kinase"/>
</dbReference>
<dbReference type="NCBIfam" id="NF007664">
    <property type="entry name" value="PRK10337.1"/>
    <property type="match status" value="1"/>
</dbReference>
<dbReference type="PANTHER" id="PTHR45436">
    <property type="entry name" value="SENSOR HISTIDINE KINASE YKOH"/>
    <property type="match status" value="1"/>
</dbReference>
<dbReference type="PANTHER" id="PTHR45436:SF14">
    <property type="entry name" value="SENSOR PROTEIN QSEC"/>
    <property type="match status" value="1"/>
</dbReference>
<dbReference type="Pfam" id="PF02518">
    <property type="entry name" value="HATPase_c"/>
    <property type="match status" value="1"/>
</dbReference>
<dbReference type="Pfam" id="PF00512">
    <property type="entry name" value="HisKA"/>
    <property type="match status" value="1"/>
</dbReference>
<dbReference type="PRINTS" id="PR00344">
    <property type="entry name" value="BCTRLSENSOR"/>
</dbReference>
<dbReference type="SMART" id="SM00387">
    <property type="entry name" value="HATPase_c"/>
    <property type="match status" value="1"/>
</dbReference>
<dbReference type="SMART" id="SM00388">
    <property type="entry name" value="HisKA"/>
    <property type="match status" value="1"/>
</dbReference>
<dbReference type="SUPFAM" id="SSF55874">
    <property type="entry name" value="ATPase domain of HSP90 chaperone/DNA topoisomerase II/histidine kinase"/>
    <property type="match status" value="1"/>
</dbReference>
<dbReference type="SUPFAM" id="SSF47384">
    <property type="entry name" value="Homodimeric domain of signal transducing histidine kinase"/>
    <property type="match status" value="1"/>
</dbReference>
<dbReference type="PROSITE" id="PS50885">
    <property type="entry name" value="HAMP"/>
    <property type="match status" value="1"/>
</dbReference>
<dbReference type="PROSITE" id="PS50109">
    <property type="entry name" value="HIS_KIN"/>
    <property type="match status" value="1"/>
</dbReference>
<keyword id="KW-0067">ATP-binding</keyword>
<keyword id="KW-0997">Cell inner membrane</keyword>
<keyword id="KW-1003">Cell membrane</keyword>
<keyword id="KW-0418">Kinase</keyword>
<keyword id="KW-0472">Membrane</keyword>
<keyword id="KW-0547">Nucleotide-binding</keyword>
<keyword id="KW-0597">Phosphoprotein</keyword>
<keyword id="KW-0808">Transferase</keyword>
<keyword id="KW-0812">Transmembrane</keyword>
<keyword id="KW-1133">Transmembrane helix</keyword>
<keyword id="KW-0902">Two-component regulatory system</keyword>
<name>QSEC_SALTI</name>
<organism>
    <name type="scientific">Salmonella typhi</name>
    <dbReference type="NCBI Taxonomy" id="90370"/>
    <lineage>
        <taxon>Bacteria</taxon>
        <taxon>Pseudomonadati</taxon>
        <taxon>Pseudomonadota</taxon>
        <taxon>Gammaproteobacteria</taxon>
        <taxon>Enterobacterales</taxon>
        <taxon>Enterobacteriaceae</taxon>
        <taxon>Salmonella</taxon>
    </lineage>
</organism>
<sequence>MKLTQRLSLRVRLTLIFLILVSITWAISSFVAWRKTTDNVDELFDTQLMLFARRLSTLDLNELNAPQRMAHTPKKLKHGHIDDDALAFAIFSADGKMLLHDGDNGQDIPYRYRREGFDNGYLKDDNDLWRFLWLNSADGKYRIVVGQEWDYREDMALAIVAAQLTPWLIALPFMLLILLLLLHRELRPLKKLAQALRFRSPESETPLDAKGVPSEVRPLVEALNQLFSRIHSMMVRERRFTSDAAHELRSPLAALKVQTEVAQLSGDDPLSRDKALTQLHAGIDRATRLVDQLLTLSRLDSLNNLQDVAEISLEELLQSAVMDIYHPAQQANIDVRLQLNAHDVIRTGQPLLLSLLVRNLLDNAIRYSPQGSVVDVTLHARSFTVRDNGPGVAPEILTHIGERFYRPPGQSVTGSGLGLSIVRRIATLHGMTVSFGNAAEGGFEAVVRW</sequence>
<protein>
    <recommendedName>
        <fullName>Sensor protein QseC</fullName>
        <ecNumber>2.7.13.3</ecNumber>
    </recommendedName>
</protein>
<evidence type="ECO:0000250" key="1"/>
<evidence type="ECO:0000255" key="2"/>
<evidence type="ECO:0000255" key="3">
    <source>
        <dbReference type="PROSITE-ProRule" id="PRU00102"/>
    </source>
</evidence>
<evidence type="ECO:0000255" key="4">
    <source>
        <dbReference type="PROSITE-ProRule" id="PRU00107"/>
    </source>
</evidence>
<gene>
    <name type="primary">qseC</name>
    <name type="ordered locus">STY3355</name>
    <name type="ordered locus">t3099</name>
</gene>
<reference key="1">
    <citation type="journal article" date="2001" name="Nature">
        <title>Complete genome sequence of a multiple drug resistant Salmonella enterica serovar Typhi CT18.</title>
        <authorList>
            <person name="Parkhill J."/>
            <person name="Dougan G."/>
            <person name="James K.D."/>
            <person name="Thomson N.R."/>
            <person name="Pickard D."/>
            <person name="Wain J."/>
            <person name="Churcher C.M."/>
            <person name="Mungall K.L."/>
            <person name="Bentley S.D."/>
            <person name="Holden M.T.G."/>
            <person name="Sebaihia M."/>
            <person name="Baker S."/>
            <person name="Basham D."/>
            <person name="Brooks K."/>
            <person name="Chillingworth T."/>
            <person name="Connerton P."/>
            <person name="Cronin A."/>
            <person name="Davis P."/>
            <person name="Davies R.M."/>
            <person name="Dowd L."/>
            <person name="White N."/>
            <person name="Farrar J."/>
            <person name="Feltwell T."/>
            <person name="Hamlin N."/>
            <person name="Haque A."/>
            <person name="Hien T.T."/>
            <person name="Holroyd S."/>
            <person name="Jagels K."/>
            <person name="Krogh A."/>
            <person name="Larsen T.S."/>
            <person name="Leather S."/>
            <person name="Moule S."/>
            <person name="O'Gaora P."/>
            <person name="Parry C."/>
            <person name="Quail M.A."/>
            <person name="Rutherford K.M."/>
            <person name="Simmonds M."/>
            <person name="Skelton J."/>
            <person name="Stevens K."/>
            <person name="Whitehead S."/>
            <person name="Barrell B.G."/>
        </authorList>
    </citation>
    <scope>NUCLEOTIDE SEQUENCE [LARGE SCALE GENOMIC DNA]</scope>
    <source>
        <strain>CT18</strain>
    </source>
</reference>
<reference key="2">
    <citation type="journal article" date="2003" name="J. Bacteriol.">
        <title>Comparative genomics of Salmonella enterica serovar Typhi strains Ty2 and CT18.</title>
        <authorList>
            <person name="Deng W."/>
            <person name="Liou S.-R."/>
            <person name="Plunkett G. III"/>
            <person name="Mayhew G.F."/>
            <person name="Rose D.J."/>
            <person name="Burland V."/>
            <person name="Kodoyianni V."/>
            <person name="Schwartz D.C."/>
            <person name="Blattner F.R."/>
        </authorList>
    </citation>
    <scope>NUCLEOTIDE SEQUENCE [LARGE SCALE GENOMIC DNA]</scope>
    <source>
        <strain>ATCC 700931 / Ty2</strain>
    </source>
</reference>
<comment type="function">
    <text evidence="1">Member of a two-component regulatory system QseB/QseC. Activates the flagella regulon by activating transcription of FlhDC. May activate QseB by phosphorylation (By similarity).</text>
</comment>
<comment type="catalytic activity">
    <reaction>
        <text>ATP + protein L-histidine = ADP + protein N-phospho-L-histidine.</text>
        <dbReference type="EC" id="2.7.13.3"/>
    </reaction>
</comment>
<comment type="subcellular location">
    <subcellularLocation>
        <location evidence="1">Cell inner membrane</location>
        <topology evidence="1">Multi-pass membrane protein</topology>
    </subcellularLocation>
</comment>